<keyword id="KW-0067">ATP-binding</keyword>
<keyword id="KW-0133">Cell shape</keyword>
<keyword id="KW-0961">Cell wall biogenesis/degradation</keyword>
<keyword id="KW-0963">Cytoplasm</keyword>
<keyword id="KW-0436">Ligase</keyword>
<keyword id="KW-0460">Magnesium</keyword>
<keyword id="KW-0464">Manganese</keyword>
<keyword id="KW-0479">Metal-binding</keyword>
<keyword id="KW-0547">Nucleotide-binding</keyword>
<keyword id="KW-0573">Peptidoglycan synthesis</keyword>
<proteinExistence type="inferred from homology"/>
<reference key="1">
    <citation type="journal article" date="2006" name="Proc. Natl. Acad. Sci. U.S.A.">
        <title>Molecular genetic anatomy of inter- and intraserotype variation in the human bacterial pathogen group A Streptococcus.</title>
        <authorList>
            <person name="Beres S.B."/>
            <person name="Richter E.W."/>
            <person name="Nagiec M.J."/>
            <person name="Sumby P."/>
            <person name="Porcella S.F."/>
            <person name="DeLeo F.R."/>
            <person name="Musser J.M."/>
        </authorList>
    </citation>
    <scope>NUCLEOTIDE SEQUENCE [LARGE SCALE GENOMIC DNA]</scope>
    <source>
        <strain>MGAS10750</strain>
    </source>
</reference>
<evidence type="ECO:0000250" key="1"/>
<evidence type="ECO:0000255" key="2">
    <source>
        <dbReference type="HAMAP-Rule" id="MF_00047"/>
    </source>
</evidence>
<dbReference type="EC" id="6.3.2.4" evidence="2"/>
<dbReference type="EMBL" id="CP000262">
    <property type="protein sequence ID" value="ABF38216.1"/>
    <property type="molecule type" value="Genomic_DNA"/>
</dbReference>
<dbReference type="SMR" id="Q1J5W7"/>
<dbReference type="KEGG" id="spi:MGAS10750_Spy1266"/>
<dbReference type="HOGENOM" id="CLU_039268_0_0_9"/>
<dbReference type="UniPathway" id="UPA00219"/>
<dbReference type="Proteomes" id="UP000002434">
    <property type="component" value="Chromosome"/>
</dbReference>
<dbReference type="GO" id="GO:0005829">
    <property type="term" value="C:cytosol"/>
    <property type="evidence" value="ECO:0007669"/>
    <property type="project" value="TreeGrafter"/>
</dbReference>
<dbReference type="GO" id="GO:0005524">
    <property type="term" value="F:ATP binding"/>
    <property type="evidence" value="ECO:0007669"/>
    <property type="project" value="UniProtKB-KW"/>
</dbReference>
<dbReference type="GO" id="GO:0008716">
    <property type="term" value="F:D-alanine-D-alanine ligase activity"/>
    <property type="evidence" value="ECO:0007669"/>
    <property type="project" value="UniProtKB-UniRule"/>
</dbReference>
<dbReference type="GO" id="GO:0046872">
    <property type="term" value="F:metal ion binding"/>
    <property type="evidence" value="ECO:0007669"/>
    <property type="project" value="UniProtKB-KW"/>
</dbReference>
<dbReference type="GO" id="GO:0071555">
    <property type="term" value="P:cell wall organization"/>
    <property type="evidence" value="ECO:0007669"/>
    <property type="project" value="UniProtKB-KW"/>
</dbReference>
<dbReference type="GO" id="GO:0009252">
    <property type="term" value="P:peptidoglycan biosynthetic process"/>
    <property type="evidence" value="ECO:0007669"/>
    <property type="project" value="UniProtKB-UniRule"/>
</dbReference>
<dbReference type="GO" id="GO:0008360">
    <property type="term" value="P:regulation of cell shape"/>
    <property type="evidence" value="ECO:0007669"/>
    <property type="project" value="UniProtKB-KW"/>
</dbReference>
<dbReference type="FunFam" id="3.30.1490.20:FF:000007">
    <property type="entry name" value="D-alanine--D-alanine ligase"/>
    <property type="match status" value="1"/>
</dbReference>
<dbReference type="FunFam" id="3.30.470.20:FF:000008">
    <property type="entry name" value="D-alanine--D-alanine ligase"/>
    <property type="match status" value="1"/>
</dbReference>
<dbReference type="Gene3D" id="3.40.50.20">
    <property type="match status" value="1"/>
</dbReference>
<dbReference type="Gene3D" id="3.30.1490.20">
    <property type="entry name" value="ATP-grasp fold, A domain"/>
    <property type="match status" value="1"/>
</dbReference>
<dbReference type="Gene3D" id="3.30.470.20">
    <property type="entry name" value="ATP-grasp fold, B domain"/>
    <property type="match status" value="1"/>
</dbReference>
<dbReference type="HAMAP" id="MF_00047">
    <property type="entry name" value="Dala_Dala_lig"/>
    <property type="match status" value="1"/>
</dbReference>
<dbReference type="InterPro" id="IPR011761">
    <property type="entry name" value="ATP-grasp"/>
</dbReference>
<dbReference type="InterPro" id="IPR013815">
    <property type="entry name" value="ATP_grasp_subdomain_1"/>
</dbReference>
<dbReference type="InterPro" id="IPR000291">
    <property type="entry name" value="D-Ala_lig_Van_CS"/>
</dbReference>
<dbReference type="InterPro" id="IPR005905">
    <property type="entry name" value="D_ala_D_ala"/>
</dbReference>
<dbReference type="InterPro" id="IPR011095">
    <property type="entry name" value="Dala_Dala_lig_C"/>
</dbReference>
<dbReference type="InterPro" id="IPR011127">
    <property type="entry name" value="Dala_Dala_lig_N"/>
</dbReference>
<dbReference type="InterPro" id="IPR016185">
    <property type="entry name" value="PreATP-grasp_dom_sf"/>
</dbReference>
<dbReference type="NCBIfam" id="TIGR01205">
    <property type="entry name" value="D_ala_D_alaTIGR"/>
    <property type="match status" value="1"/>
</dbReference>
<dbReference type="NCBIfam" id="NF002528">
    <property type="entry name" value="PRK01966.1-4"/>
    <property type="match status" value="1"/>
</dbReference>
<dbReference type="NCBIfam" id="NF002529">
    <property type="entry name" value="PRK01966.1-5"/>
    <property type="match status" value="1"/>
</dbReference>
<dbReference type="PANTHER" id="PTHR23132">
    <property type="entry name" value="D-ALANINE--D-ALANINE LIGASE"/>
    <property type="match status" value="1"/>
</dbReference>
<dbReference type="PANTHER" id="PTHR23132:SF25">
    <property type="entry name" value="D-ALANINE--D-ALANINE LIGASE A"/>
    <property type="match status" value="1"/>
</dbReference>
<dbReference type="Pfam" id="PF07478">
    <property type="entry name" value="Dala_Dala_lig_C"/>
    <property type="match status" value="1"/>
</dbReference>
<dbReference type="Pfam" id="PF01820">
    <property type="entry name" value="Dala_Dala_lig_N"/>
    <property type="match status" value="1"/>
</dbReference>
<dbReference type="PIRSF" id="PIRSF039102">
    <property type="entry name" value="Ddl/VanB"/>
    <property type="match status" value="1"/>
</dbReference>
<dbReference type="SUPFAM" id="SSF56059">
    <property type="entry name" value="Glutathione synthetase ATP-binding domain-like"/>
    <property type="match status" value="1"/>
</dbReference>
<dbReference type="SUPFAM" id="SSF52440">
    <property type="entry name" value="PreATP-grasp domain"/>
    <property type="match status" value="1"/>
</dbReference>
<dbReference type="PROSITE" id="PS50975">
    <property type="entry name" value="ATP_GRASP"/>
    <property type="match status" value="1"/>
</dbReference>
<dbReference type="PROSITE" id="PS00843">
    <property type="entry name" value="DALA_DALA_LIGASE_1"/>
    <property type="match status" value="1"/>
</dbReference>
<dbReference type="PROSITE" id="PS00844">
    <property type="entry name" value="DALA_DALA_LIGASE_2"/>
    <property type="match status" value="1"/>
</dbReference>
<protein>
    <recommendedName>
        <fullName evidence="2">D-alanine--D-alanine ligase</fullName>
        <ecNumber evidence="2">6.3.2.4</ecNumber>
    </recommendedName>
    <alternativeName>
        <fullName evidence="2">D-Ala-D-Ala ligase</fullName>
    </alternativeName>
    <alternativeName>
        <fullName evidence="2">D-alanylalanine synthetase</fullName>
    </alternativeName>
</protein>
<gene>
    <name evidence="2" type="primary">ddl</name>
    <name type="ordered locus">MGAS10750_Spy1266</name>
</gene>
<organism>
    <name type="scientific">Streptococcus pyogenes serotype M4 (strain MGAS10750)</name>
    <dbReference type="NCBI Taxonomy" id="370554"/>
    <lineage>
        <taxon>Bacteria</taxon>
        <taxon>Bacillati</taxon>
        <taxon>Bacillota</taxon>
        <taxon>Bacilli</taxon>
        <taxon>Lactobacillales</taxon>
        <taxon>Streptococcaceae</taxon>
        <taxon>Streptococcus</taxon>
    </lineage>
</organism>
<sequence length="348" mass="38965">MSKQTLVLLYGGRSAEREVSVLSAESVMRAVNYDKFLVKTYFITQMGQFIKTQQFSEKPSESERLMTNETIELTQKIKPSDIYEEGAVVFPVLHGPMGEDGSIQGFLEVLRMPYIGTNVMSSSIAMDKITTKRVLESIGIPQVAYTVYIDGQDLEACLVETLARLTFPIFVKPANMGSSVGISKAQTKVELRKAIQLALTYDSRVLIEQGVIAREIEVGLLGNDKVKSTLPGEVIKDVDFYDYQAKYVDNKITMAIPADVDQSIVTEMRSYAEVAFKALGGCGLSRCDFFLTQDGQVYLNELNTMPGFTQWSMYPLLWENMGLAYPDLIEELVTLAQEIFDQRESHLI</sequence>
<comment type="function">
    <text evidence="2">Cell wall formation.</text>
</comment>
<comment type="catalytic activity">
    <reaction evidence="2">
        <text>2 D-alanine + ATP = D-alanyl-D-alanine + ADP + phosphate + H(+)</text>
        <dbReference type="Rhea" id="RHEA:11224"/>
        <dbReference type="ChEBI" id="CHEBI:15378"/>
        <dbReference type="ChEBI" id="CHEBI:30616"/>
        <dbReference type="ChEBI" id="CHEBI:43474"/>
        <dbReference type="ChEBI" id="CHEBI:57416"/>
        <dbReference type="ChEBI" id="CHEBI:57822"/>
        <dbReference type="ChEBI" id="CHEBI:456216"/>
        <dbReference type="EC" id="6.3.2.4"/>
    </reaction>
</comment>
<comment type="cofactor">
    <cofactor evidence="1">
        <name>Mg(2+)</name>
        <dbReference type="ChEBI" id="CHEBI:18420"/>
    </cofactor>
    <cofactor evidence="1">
        <name>Mn(2+)</name>
        <dbReference type="ChEBI" id="CHEBI:29035"/>
    </cofactor>
    <text evidence="1">Binds 2 magnesium or manganese ions per subunit.</text>
</comment>
<comment type="pathway">
    <text evidence="2">Cell wall biogenesis; peptidoglycan biosynthesis.</text>
</comment>
<comment type="subcellular location">
    <subcellularLocation>
        <location evidence="2">Cytoplasm</location>
    </subcellularLocation>
</comment>
<comment type="similarity">
    <text evidence="2">Belongs to the D-alanine--D-alanine ligase family.</text>
</comment>
<name>DDL_STRPF</name>
<feature type="chain" id="PRO_1000030503" description="D-alanine--D-alanine ligase">
    <location>
        <begin position="1"/>
        <end position="348"/>
    </location>
</feature>
<feature type="domain" description="ATP-grasp" evidence="2">
    <location>
        <begin position="132"/>
        <end position="334"/>
    </location>
</feature>
<feature type="binding site" evidence="2">
    <location>
        <begin position="162"/>
        <end position="217"/>
    </location>
    <ligand>
        <name>ATP</name>
        <dbReference type="ChEBI" id="CHEBI:30616"/>
    </ligand>
</feature>
<feature type="binding site" evidence="2">
    <location>
        <position position="288"/>
    </location>
    <ligand>
        <name>Mg(2+)</name>
        <dbReference type="ChEBI" id="CHEBI:18420"/>
        <label>1</label>
    </ligand>
</feature>
<feature type="binding site" evidence="2">
    <location>
        <position position="301"/>
    </location>
    <ligand>
        <name>Mg(2+)</name>
        <dbReference type="ChEBI" id="CHEBI:18420"/>
        <label>1</label>
    </ligand>
</feature>
<feature type="binding site" evidence="2">
    <location>
        <position position="301"/>
    </location>
    <ligand>
        <name>Mg(2+)</name>
        <dbReference type="ChEBI" id="CHEBI:18420"/>
        <label>2</label>
    </ligand>
</feature>
<feature type="binding site" evidence="2">
    <location>
        <position position="303"/>
    </location>
    <ligand>
        <name>Mg(2+)</name>
        <dbReference type="ChEBI" id="CHEBI:18420"/>
        <label>2</label>
    </ligand>
</feature>
<accession>Q1J5W7</accession>